<dbReference type="EC" id="3.1.1.3" evidence="9"/>
<dbReference type="PDB" id="1CVL">
    <property type="method" value="X-ray"/>
    <property type="resolution" value="1.60 A"/>
    <property type="chains" value="A=1-319"/>
</dbReference>
<dbReference type="PDB" id="1QGE">
    <property type="method" value="X-ray"/>
    <property type="resolution" value="1.70 A"/>
    <property type="chains" value="D=1-222, E=223-319"/>
</dbReference>
<dbReference type="PDBsum" id="1CVL"/>
<dbReference type="PDBsum" id="1QGE"/>
<dbReference type="SMR" id="P0DUB9"/>
<dbReference type="ESTHER" id="burgl-lipas">
    <property type="family name" value="Bacterial_lip_FamI.2"/>
</dbReference>
<dbReference type="EvolutionaryTrace" id="P0DUB9"/>
<dbReference type="GO" id="GO:0005576">
    <property type="term" value="C:extracellular region"/>
    <property type="evidence" value="ECO:0007669"/>
    <property type="project" value="UniProtKB-SubCell"/>
</dbReference>
<dbReference type="GO" id="GO:0046872">
    <property type="term" value="F:metal ion binding"/>
    <property type="evidence" value="ECO:0007669"/>
    <property type="project" value="UniProtKB-KW"/>
</dbReference>
<dbReference type="GO" id="GO:0004806">
    <property type="term" value="F:triacylglycerol lipase activity"/>
    <property type="evidence" value="ECO:0007669"/>
    <property type="project" value="UniProtKB-EC"/>
</dbReference>
<dbReference type="GO" id="GO:0016042">
    <property type="term" value="P:lipid catabolic process"/>
    <property type="evidence" value="ECO:0007669"/>
    <property type="project" value="UniProtKB-KW"/>
</dbReference>
<dbReference type="Gene3D" id="3.40.50.1820">
    <property type="entry name" value="alpha/beta hydrolase"/>
    <property type="match status" value="1"/>
</dbReference>
<dbReference type="InterPro" id="IPR000073">
    <property type="entry name" value="AB_hydrolase_1"/>
</dbReference>
<dbReference type="InterPro" id="IPR029058">
    <property type="entry name" value="AB_hydrolase_fold"/>
</dbReference>
<dbReference type="Pfam" id="PF00561">
    <property type="entry name" value="Abhydrolase_1"/>
    <property type="match status" value="1"/>
</dbReference>
<dbReference type="SUPFAM" id="SSF53474">
    <property type="entry name" value="alpha/beta-Hydrolases"/>
    <property type="match status" value="1"/>
</dbReference>
<dbReference type="PROSITE" id="PS00120">
    <property type="entry name" value="LIPASE_SER"/>
    <property type="match status" value="1"/>
</dbReference>
<proteinExistence type="evidence at protein level"/>
<reference key="1">
    <citation type="journal article" date="1995" name="Biochim. Biophys. Acta">
        <title>Lipase from Chromobacterium viscosum: biochemical characterization indicating homology to the lipase from Pseudomonas glumae.</title>
        <authorList>
            <person name="Taipa M.A."/>
            <person name="Liebeton K."/>
            <person name="Costa J.V."/>
            <person name="Cabral J.M.S."/>
            <person name="Jaeger K.-E."/>
        </authorList>
    </citation>
    <scope>PROTEIN SEQUENCE OF 1-15</scope>
    <scope>FUNCTION</scope>
    <scope>CATALYTIC ACTIVITY</scope>
</reference>
<reference evidence="12" key="2">
    <citation type="journal article" date="1996" name="J. Mol. Biol.">
        <title>Crystal structure of a bacterial lipase from Chromobacterium viscosum ATCC 6918 refined at 1.6-A resolution.</title>
        <authorList>
            <person name="Lang D."/>
            <person name="Hofmann B."/>
            <person name="Haalck L."/>
            <person name="Hecht H.-J."/>
            <person name="Spener F."/>
            <person name="Schmid R.D."/>
            <person name="Schomburg D."/>
        </authorList>
    </citation>
    <scope>X-RAY CRYSTALLOGRAPHY (1.6 ANGSTROMS) OF THE CLOSED FORM IN COMPLEX WITH CALCIUM</scope>
    <scope>COFACTOR</scope>
    <scope>ACTIVE SITE</scope>
    <scope>MASS SPECTROMETRY</scope>
    <scope>DISULFIDE BOND</scope>
    <scope>SUBUNIT</scope>
    <scope>BIOTECHNOLOGY</scope>
    <source>
        <strain>ATCC 6918 / DSM 20144 / NCIMB 8180 / NCTC 2416</strain>
    </source>
</reference>
<reference evidence="13" key="3">
    <citation type="submission" date="1999-04" db="PDB data bank">
        <title>Structural and kinetic investigations of enantiomeric binding mode of subclass I lipases from the family of Pseudomonadaceae.</title>
        <authorList>
            <person name="Lang D.A."/>
            <person name="Stadler P."/>
            <person name="Kovacs A."/>
            <person name="Paltauf F."/>
            <person name="Dijkstra B.W."/>
        </authorList>
    </citation>
    <scope>X-RAY CRYSTALLOGRAPHY (1.70 ANGSTROMS) OF 40-261 AND 262-358 IN COMPLEX WITH CALCIUM ION</scope>
    <scope>COFACTOR</scope>
    <scope>SUBUNIT</scope>
    <source>
        <strain>ATCC 6918 / DSM 20144 / NCIMB 8180 / NCTC 2416</strain>
    </source>
</reference>
<sequence length="319" mass="33092">ADTYAATRYPVILVHGLAGTDKFANVVDYWYGIQSDLQSHGAKVYVANLSGFQSDDGPNGRGEQLLAYVKQVLAATGATKVNLIGHSQGGLTSRYVAAVAPQLVASVTTIGTPHRGSEFADFVQDVLKTDPTGLSSTVIAAFVNVFGTLVSSSHNTDQDALAALRTLTTAQTATYNRNFPSAGLGAPGSCQTGAATETVGGSQHLLYSWGGTAIQPTSTVLGVTGATDTSTGTLDVANVTDPSTLALLATGAVMINRASGQNDGLVSRCSSLFGQVISTSYHWNHLDEINQLLGVRGANAEDPVAVIRTHVNRLKLQGV</sequence>
<accession>P0DUB9</accession>
<accession>Q05489</accession>
<keyword id="KW-0002">3D-structure</keyword>
<keyword id="KW-0106">Calcium</keyword>
<keyword id="KW-0903">Direct protein sequencing</keyword>
<keyword id="KW-1015">Disulfide bond</keyword>
<keyword id="KW-0378">Hydrolase</keyword>
<keyword id="KW-0442">Lipid degradation</keyword>
<keyword id="KW-0443">Lipid metabolism</keyword>
<keyword id="KW-0479">Metal-binding</keyword>
<keyword id="KW-0964">Secreted</keyword>
<organism>
    <name type="scientific">Pseudarthrobacter phenanthrenivorans</name>
    <name type="common">Arthrobacter phenanthrenivorans</name>
    <dbReference type="NCBI Taxonomy" id="361575"/>
    <lineage>
        <taxon>Bacteria</taxon>
        <taxon>Bacillati</taxon>
        <taxon>Actinomycetota</taxon>
        <taxon>Actinomycetes</taxon>
        <taxon>Micrococcales</taxon>
        <taxon>Micrococcaceae</taxon>
        <taxon>Pseudarthrobacter</taxon>
    </lineage>
</organism>
<evidence type="ECO:0000250" key="1">
    <source>
        <dbReference type="UniProtKB" id="P0DUB8"/>
    </source>
</evidence>
<evidence type="ECO:0000250" key="2">
    <source>
        <dbReference type="UniProtKB" id="P22088"/>
    </source>
</evidence>
<evidence type="ECO:0000250" key="3">
    <source>
        <dbReference type="UniProtKB" id="P26876"/>
    </source>
</evidence>
<evidence type="ECO:0000255" key="4"/>
<evidence type="ECO:0000269" key="5">
    <source>
    </source>
</evidence>
<evidence type="ECO:0000269" key="6">
    <source>
    </source>
</evidence>
<evidence type="ECO:0000303" key="7">
    <source>
    </source>
</evidence>
<evidence type="ECO:0000305" key="8"/>
<evidence type="ECO:0000305" key="9">
    <source>
    </source>
</evidence>
<evidence type="ECO:0000305" key="10">
    <source>
    </source>
</evidence>
<evidence type="ECO:0000305" key="11">
    <source ref="3"/>
</evidence>
<evidence type="ECO:0007744" key="12">
    <source>
        <dbReference type="PDB" id="1CVL"/>
    </source>
</evidence>
<evidence type="ECO:0007744" key="13">
    <source>
        <dbReference type="PDB" id="1QGE"/>
    </source>
</evidence>
<evidence type="ECO:0007829" key="14">
    <source>
        <dbReference type="PDB" id="1CVL"/>
    </source>
</evidence>
<evidence type="ECO:0007829" key="15">
    <source>
        <dbReference type="PDB" id="1QGE"/>
    </source>
</evidence>
<comment type="function">
    <text evidence="5">Catalyzes the hydrolysis of triacylglycerol.</text>
</comment>
<comment type="catalytic activity">
    <reaction evidence="9">
        <text>a triacylglycerol + H2O = a diacylglycerol + a fatty acid + H(+)</text>
        <dbReference type="Rhea" id="RHEA:12044"/>
        <dbReference type="ChEBI" id="CHEBI:15377"/>
        <dbReference type="ChEBI" id="CHEBI:15378"/>
        <dbReference type="ChEBI" id="CHEBI:17855"/>
        <dbReference type="ChEBI" id="CHEBI:18035"/>
        <dbReference type="ChEBI" id="CHEBI:28868"/>
        <dbReference type="EC" id="3.1.1.3"/>
    </reaction>
</comment>
<comment type="cofactor">
    <cofactor evidence="6 11">
        <name>Ca(2+)</name>
        <dbReference type="ChEBI" id="CHEBI:29108"/>
    </cofactor>
    <text evidence="6 11">Binds 1 Ca(2+) ion per subunit.</text>
</comment>
<comment type="subunit">
    <text evidence="1 10 11">Monomer (Probable). Interacts with lipase-specific foldase Lif (By similarity).</text>
</comment>
<comment type="subcellular location">
    <subcellularLocation>
        <location evidence="1">Secreted</location>
    </subcellularLocation>
    <text evidence="1">Correct periplasmic folding, necessary for secretion, requires the lipase-specific foldase LifO. Secretion probably occurs via a type II secretion system.</text>
</comment>
<comment type="mass spectrometry" mass="32839.0" method="Electrospray" evidence="6"/>
<comment type="biotechnology">
    <text evidence="6">Found to be superior in improving overall detergency.</text>
</comment>
<comment type="similarity">
    <text evidence="8">Belongs to the AB hydrolase superfamily. Pseudomonas lipase family.</text>
</comment>
<gene>
    <name evidence="8" type="primary">lip</name>
    <name evidence="7" type="synonym">lipA</name>
</gene>
<feature type="chain" id="PRO_0000451466" description="Triacylglycerol lipase">
    <location>
        <begin position="1"/>
        <end position="319"/>
    </location>
</feature>
<feature type="domain" description="AB hydrolase-1" evidence="4">
    <location>
        <begin position="10"/>
        <end position="288"/>
    </location>
</feature>
<feature type="active site" description="Nucleophile" evidence="10">
    <location>
        <position position="87"/>
    </location>
</feature>
<feature type="active site" description="Charge relay system" evidence="10">
    <location>
        <position position="263"/>
    </location>
</feature>
<feature type="active site" description="Charge relay system" evidence="10">
    <location>
        <position position="285"/>
    </location>
</feature>
<feature type="binding site" evidence="2">
    <location>
        <position position="17"/>
    </location>
    <ligand>
        <name>substrate</name>
    </ligand>
</feature>
<feature type="binding site" evidence="2">
    <location>
        <position position="88"/>
    </location>
    <ligand>
        <name>substrate</name>
    </ligand>
</feature>
<feature type="binding site" evidence="6 12 13">
    <location>
        <position position="241"/>
    </location>
    <ligand>
        <name>Ca(2+)</name>
        <dbReference type="ChEBI" id="CHEBI:29108"/>
    </ligand>
</feature>
<feature type="binding site" evidence="6 12 13">
    <location>
        <position position="287"/>
    </location>
    <ligand>
        <name>Ca(2+)</name>
        <dbReference type="ChEBI" id="CHEBI:29108"/>
    </ligand>
</feature>
<feature type="binding site" evidence="6 12 13">
    <location>
        <position position="291"/>
    </location>
    <ligand>
        <name>Ca(2+)</name>
        <dbReference type="ChEBI" id="CHEBI:29108"/>
    </ligand>
</feature>
<feature type="binding site" evidence="6 12 13">
    <location>
        <position position="295"/>
    </location>
    <ligand>
        <name>Ca(2+)</name>
        <dbReference type="ChEBI" id="CHEBI:29108"/>
    </ligand>
</feature>
<feature type="disulfide bond" evidence="6">
    <location>
        <begin position="190"/>
        <end position="269"/>
    </location>
</feature>
<feature type="unsure residue" evidence="8">
    <location>
        <begin position="220"/>
        <end position="224"/>
    </location>
</feature>
<feature type="sequence conflict" description="In Ref. 1; AA sequence." evidence="8" ref="1">
    <original>A</original>
    <variation>W</variation>
    <location>
        <position position="1"/>
    </location>
</feature>
<feature type="strand" evidence="14">
    <location>
        <begin position="11"/>
        <end position="14"/>
    </location>
</feature>
<feature type="strand" evidence="14">
    <location>
        <begin position="19"/>
        <end position="23"/>
    </location>
</feature>
<feature type="turn" evidence="14">
    <location>
        <begin position="24"/>
        <end position="26"/>
    </location>
</feature>
<feature type="strand" evidence="14">
    <location>
        <begin position="27"/>
        <end position="30"/>
    </location>
</feature>
<feature type="helix" evidence="14">
    <location>
        <begin position="33"/>
        <end position="39"/>
    </location>
</feature>
<feature type="strand" evidence="14">
    <location>
        <begin position="44"/>
        <end position="46"/>
    </location>
</feature>
<feature type="strand" evidence="15">
    <location>
        <begin position="55"/>
        <end position="57"/>
    </location>
</feature>
<feature type="helix" evidence="14">
    <location>
        <begin position="61"/>
        <end position="76"/>
    </location>
</feature>
<feature type="strand" evidence="14">
    <location>
        <begin position="81"/>
        <end position="86"/>
    </location>
</feature>
<feature type="helix" evidence="14">
    <location>
        <begin position="89"/>
        <end position="99"/>
    </location>
</feature>
<feature type="helix" evidence="14">
    <location>
        <begin position="101"/>
        <end position="103"/>
    </location>
</feature>
<feature type="strand" evidence="14">
    <location>
        <begin position="104"/>
        <end position="111"/>
    </location>
</feature>
<feature type="helix" evidence="14">
    <location>
        <begin position="118"/>
        <end position="127"/>
    </location>
</feature>
<feature type="helix" evidence="14">
    <location>
        <begin position="137"/>
        <end position="147"/>
    </location>
</feature>
<feature type="helix" evidence="14">
    <location>
        <begin position="156"/>
        <end position="162"/>
    </location>
</feature>
<feature type="helix" evidence="14">
    <location>
        <begin position="163"/>
        <end position="167"/>
    </location>
</feature>
<feature type="helix" evidence="14">
    <location>
        <begin position="169"/>
        <end position="178"/>
    </location>
</feature>
<feature type="strand" evidence="14">
    <location>
        <begin position="195"/>
        <end position="199"/>
    </location>
</feature>
<feature type="strand" evidence="14">
    <location>
        <begin position="202"/>
        <end position="211"/>
    </location>
</feature>
<feature type="strand" evidence="14">
    <location>
        <begin position="214"/>
        <end position="216"/>
    </location>
</feature>
<feature type="strand" evidence="14">
    <location>
        <begin position="225"/>
        <end position="228"/>
    </location>
</feature>
<feature type="helix" evidence="14">
    <location>
        <begin position="237"/>
        <end position="240"/>
    </location>
</feature>
<feature type="helix" evidence="14">
    <location>
        <begin position="243"/>
        <end position="256"/>
    </location>
</feature>
<feature type="strand" evidence="14">
    <location>
        <begin position="261"/>
        <end position="267"/>
    </location>
</feature>
<feature type="helix" evidence="14">
    <location>
        <begin position="268"/>
        <end position="271"/>
    </location>
</feature>
<feature type="strand" evidence="14">
    <location>
        <begin position="274"/>
        <end position="281"/>
    </location>
</feature>
<feature type="helix" evidence="14">
    <location>
        <begin position="287"/>
        <end position="289"/>
    </location>
</feature>
<feature type="turn" evidence="14">
    <location>
        <begin position="290"/>
        <end position="294"/>
    </location>
</feature>
<feature type="helix" evidence="14">
    <location>
        <begin position="303"/>
        <end position="316"/>
    </location>
</feature>
<protein>
    <recommendedName>
        <fullName evidence="8">Triacylglycerol lipase</fullName>
        <ecNumber evidence="9">3.1.1.3</ecNumber>
    </recommendedName>
    <alternativeName>
        <fullName evidence="8">Extracellular lipase</fullName>
    </alternativeName>
    <alternativeName>
        <fullName evidence="3">Triacylglycerol ester hydrolase</fullName>
    </alternativeName>
</protein>
<name>LIP_PSEPS</name>